<reference key="1">
    <citation type="journal article" date="2004" name="Nat. Biotechnol.">
        <title>Complete sequence and comparative genome analysis of the dairy bacterium Streptococcus thermophilus.</title>
        <authorList>
            <person name="Bolotin A."/>
            <person name="Quinquis B."/>
            <person name="Renault P."/>
            <person name="Sorokin A."/>
            <person name="Ehrlich S.D."/>
            <person name="Kulakauskas S."/>
            <person name="Lapidus A."/>
            <person name="Goltsman E."/>
            <person name="Mazur M."/>
            <person name="Pusch G.D."/>
            <person name="Fonstein M."/>
            <person name="Overbeek R."/>
            <person name="Kyprides N."/>
            <person name="Purnelle B."/>
            <person name="Prozzi D."/>
            <person name="Ngui K."/>
            <person name="Masuy D."/>
            <person name="Hancy F."/>
            <person name="Burteau S."/>
            <person name="Boutry M."/>
            <person name="Delcour J."/>
            <person name="Goffeau A."/>
            <person name="Hols P."/>
        </authorList>
    </citation>
    <scope>NUCLEOTIDE SEQUENCE [LARGE SCALE GENOMIC DNA]</scope>
    <source>
        <strain>ATCC BAA-250 / LMG 18311</strain>
    </source>
</reference>
<organism>
    <name type="scientific">Streptococcus thermophilus (strain ATCC BAA-250 / LMG 18311)</name>
    <dbReference type="NCBI Taxonomy" id="264199"/>
    <lineage>
        <taxon>Bacteria</taxon>
        <taxon>Bacillati</taxon>
        <taxon>Bacillota</taxon>
        <taxon>Bacilli</taxon>
        <taxon>Lactobacillales</taxon>
        <taxon>Streptococcaceae</taxon>
        <taxon>Streptococcus</taxon>
    </lineage>
</organism>
<accession>Q5M3S7</accession>
<protein>
    <recommendedName>
        <fullName evidence="1">Phenylalanine--tRNA ligase beta subunit</fullName>
        <ecNumber evidence="1">6.1.1.20</ecNumber>
    </recommendedName>
    <alternativeName>
        <fullName evidence="1">Phenylalanyl-tRNA synthetase beta subunit</fullName>
        <shortName evidence="1">PheRS</shortName>
    </alternativeName>
</protein>
<evidence type="ECO:0000255" key="1">
    <source>
        <dbReference type="HAMAP-Rule" id="MF_00283"/>
    </source>
</evidence>
<evidence type="ECO:0000305" key="2"/>
<keyword id="KW-0030">Aminoacyl-tRNA synthetase</keyword>
<keyword id="KW-0067">ATP-binding</keyword>
<keyword id="KW-0963">Cytoplasm</keyword>
<keyword id="KW-0436">Ligase</keyword>
<keyword id="KW-0460">Magnesium</keyword>
<keyword id="KW-0479">Metal-binding</keyword>
<keyword id="KW-0547">Nucleotide-binding</keyword>
<keyword id="KW-0648">Protein biosynthesis</keyword>
<keyword id="KW-1185">Reference proteome</keyword>
<keyword id="KW-0694">RNA-binding</keyword>
<keyword id="KW-0820">tRNA-binding</keyword>
<name>SYFB_STRT2</name>
<gene>
    <name evidence="1" type="primary">pheT</name>
    <name type="ordered locus">stu1292</name>
</gene>
<feature type="chain" id="PRO_0000126969" description="Phenylalanine--tRNA ligase beta subunit">
    <location>
        <begin position="1"/>
        <end position="802"/>
    </location>
</feature>
<feature type="domain" description="tRNA-binding" evidence="1">
    <location>
        <begin position="39"/>
        <end position="154"/>
    </location>
</feature>
<feature type="domain" description="B5" evidence="1">
    <location>
        <begin position="407"/>
        <end position="482"/>
    </location>
</feature>
<feature type="domain" description="FDX-ACB" evidence="1">
    <location>
        <begin position="709"/>
        <end position="802"/>
    </location>
</feature>
<feature type="binding site" evidence="1">
    <location>
        <position position="460"/>
    </location>
    <ligand>
        <name>Mg(2+)</name>
        <dbReference type="ChEBI" id="CHEBI:18420"/>
        <note>shared with alpha subunit</note>
    </ligand>
</feature>
<feature type="binding site" evidence="1">
    <location>
        <position position="466"/>
    </location>
    <ligand>
        <name>Mg(2+)</name>
        <dbReference type="ChEBI" id="CHEBI:18420"/>
        <note>shared with alpha subunit</note>
    </ligand>
</feature>
<feature type="binding site" evidence="1">
    <location>
        <position position="469"/>
    </location>
    <ligand>
        <name>Mg(2+)</name>
        <dbReference type="ChEBI" id="CHEBI:18420"/>
        <note>shared with alpha subunit</note>
    </ligand>
</feature>
<feature type="binding site" evidence="1">
    <location>
        <position position="470"/>
    </location>
    <ligand>
        <name>Mg(2+)</name>
        <dbReference type="ChEBI" id="CHEBI:18420"/>
        <note>shared with alpha subunit</note>
    </ligand>
</feature>
<dbReference type="EC" id="6.1.1.20" evidence="1"/>
<dbReference type="EMBL" id="CP000023">
    <property type="protein sequence ID" value="AAV60923.1"/>
    <property type="status" value="ALT_INIT"/>
    <property type="molecule type" value="Genomic_DNA"/>
</dbReference>
<dbReference type="RefSeq" id="WP_041827153.1">
    <property type="nucleotide sequence ID" value="NC_006448.1"/>
</dbReference>
<dbReference type="SMR" id="Q5M3S7"/>
<dbReference type="STRING" id="264199.stu1292"/>
<dbReference type="GeneID" id="66899078"/>
<dbReference type="KEGG" id="stl:stu1292"/>
<dbReference type="PATRIC" id="fig|264199.4.peg.1276"/>
<dbReference type="eggNOG" id="COG0072">
    <property type="taxonomic scope" value="Bacteria"/>
</dbReference>
<dbReference type="eggNOG" id="COG0073">
    <property type="taxonomic scope" value="Bacteria"/>
</dbReference>
<dbReference type="HOGENOM" id="CLU_016891_0_0_9"/>
<dbReference type="Proteomes" id="UP000001170">
    <property type="component" value="Chromosome"/>
</dbReference>
<dbReference type="GO" id="GO:0009328">
    <property type="term" value="C:phenylalanine-tRNA ligase complex"/>
    <property type="evidence" value="ECO:0007669"/>
    <property type="project" value="TreeGrafter"/>
</dbReference>
<dbReference type="GO" id="GO:0005524">
    <property type="term" value="F:ATP binding"/>
    <property type="evidence" value="ECO:0007669"/>
    <property type="project" value="UniProtKB-UniRule"/>
</dbReference>
<dbReference type="GO" id="GO:0140096">
    <property type="term" value="F:catalytic activity, acting on a protein"/>
    <property type="evidence" value="ECO:0007669"/>
    <property type="project" value="UniProtKB-ARBA"/>
</dbReference>
<dbReference type="GO" id="GO:0000287">
    <property type="term" value="F:magnesium ion binding"/>
    <property type="evidence" value="ECO:0007669"/>
    <property type="project" value="UniProtKB-UniRule"/>
</dbReference>
<dbReference type="GO" id="GO:0004826">
    <property type="term" value="F:phenylalanine-tRNA ligase activity"/>
    <property type="evidence" value="ECO:0007669"/>
    <property type="project" value="UniProtKB-UniRule"/>
</dbReference>
<dbReference type="GO" id="GO:0016740">
    <property type="term" value="F:transferase activity"/>
    <property type="evidence" value="ECO:0007669"/>
    <property type="project" value="UniProtKB-ARBA"/>
</dbReference>
<dbReference type="GO" id="GO:0000049">
    <property type="term" value="F:tRNA binding"/>
    <property type="evidence" value="ECO:0007669"/>
    <property type="project" value="UniProtKB-KW"/>
</dbReference>
<dbReference type="GO" id="GO:0006432">
    <property type="term" value="P:phenylalanyl-tRNA aminoacylation"/>
    <property type="evidence" value="ECO:0007669"/>
    <property type="project" value="UniProtKB-UniRule"/>
</dbReference>
<dbReference type="CDD" id="cd00769">
    <property type="entry name" value="PheRS_beta_core"/>
    <property type="match status" value="1"/>
</dbReference>
<dbReference type="CDD" id="cd02796">
    <property type="entry name" value="tRNA_bind_bactPheRS"/>
    <property type="match status" value="1"/>
</dbReference>
<dbReference type="FunFam" id="2.40.50.140:FF:000045">
    <property type="entry name" value="Phenylalanine--tRNA ligase beta subunit"/>
    <property type="match status" value="1"/>
</dbReference>
<dbReference type="FunFam" id="3.30.56.10:FF:000002">
    <property type="entry name" value="Phenylalanine--tRNA ligase beta subunit"/>
    <property type="match status" value="1"/>
</dbReference>
<dbReference type="FunFam" id="3.30.70.380:FF:000001">
    <property type="entry name" value="Phenylalanine--tRNA ligase beta subunit"/>
    <property type="match status" value="1"/>
</dbReference>
<dbReference type="FunFam" id="3.30.930.10:FF:000022">
    <property type="entry name" value="Phenylalanine--tRNA ligase beta subunit"/>
    <property type="match status" value="1"/>
</dbReference>
<dbReference type="FunFam" id="3.50.40.10:FF:000001">
    <property type="entry name" value="Phenylalanine--tRNA ligase beta subunit"/>
    <property type="match status" value="1"/>
</dbReference>
<dbReference type="Gene3D" id="3.30.56.10">
    <property type="match status" value="2"/>
</dbReference>
<dbReference type="Gene3D" id="3.30.930.10">
    <property type="entry name" value="Bira Bifunctional Protein, Domain 2"/>
    <property type="match status" value="1"/>
</dbReference>
<dbReference type="Gene3D" id="3.30.70.380">
    <property type="entry name" value="Ferrodoxin-fold anticodon-binding domain"/>
    <property type="match status" value="1"/>
</dbReference>
<dbReference type="Gene3D" id="2.40.50.140">
    <property type="entry name" value="Nucleic acid-binding proteins"/>
    <property type="match status" value="1"/>
</dbReference>
<dbReference type="Gene3D" id="3.50.40.10">
    <property type="entry name" value="Phenylalanyl-trna Synthetase, Chain B, domain 3"/>
    <property type="match status" value="1"/>
</dbReference>
<dbReference type="HAMAP" id="MF_00283">
    <property type="entry name" value="Phe_tRNA_synth_beta1"/>
    <property type="match status" value="1"/>
</dbReference>
<dbReference type="InterPro" id="IPR045864">
    <property type="entry name" value="aa-tRNA-synth_II/BPL/LPL"/>
</dbReference>
<dbReference type="InterPro" id="IPR005146">
    <property type="entry name" value="B3/B4_tRNA-bd"/>
</dbReference>
<dbReference type="InterPro" id="IPR009061">
    <property type="entry name" value="DNA-bd_dom_put_sf"/>
</dbReference>
<dbReference type="InterPro" id="IPR005121">
    <property type="entry name" value="Fdx_antiC-bd"/>
</dbReference>
<dbReference type="InterPro" id="IPR036690">
    <property type="entry name" value="Fdx_antiC-bd_sf"/>
</dbReference>
<dbReference type="InterPro" id="IPR012340">
    <property type="entry name" value="NA-bd_OB-fold"/>
</dbReference>
<dbReference type="InterPro" id="IPR045060">
    <property type="entry name" value="Phe-tRNA-ligase_IIc_bsu"/>
</dbReference>
<dbReference type="InterPro" id="IPR004532">
    <property type="entry name" value="Phe-tRNA-ligase_IIc_bsu_bact"/>
</dbReference>
<dbReference type="InterPro" id="IPR020825">
    <property type="entry name" value="Phe-tRNA_synthase-like_B3/B4"/>
</dbReference>
<dbReference type="InterPro" id="IPR041616">
    <property type="entry name" value="PheRS_beta_core"/>
</dbReference>
<dbReference type="InterPro" id="IPR002547">
    <property type="entry name" value="tRNA-bd_dom"/>
</dbReference>
<dbReference type="InterPro" id="IPR033714">
    <property type="entry name" value="tRNA_bind_bactPheRS"/>
</dbReference>
<dbReference type="InterPro" id="IPR005147">
    <property type="entry name" value="tRNA_synthase_B5-dom"/>
</dbReference>
<dbReference type="NCBIfam" id="TIGR00472">
    <property type="entry name" value="pheT_bact"/>
    <property type="match status" value="1"/>
</dbReference>
<dbReference type="NCBIfam" id="NF045760">
    <property type="entry name" value="YtpR"/>
    <property type="match status" value="1"/>
</dbReference>
<dbReference type="PANTHER" id="PTHR10947:SF0">
    <property type="entry name" value="PHENYLALANINE--TRNA LIGASE BETA SUBUNIT"/>
    <property type="match status" value="1"/>
</dbReference>
<dbReference type="PANTHER" id="PTHR10947">
    <property type="entry name" value="PHENYLALANYL-TRNA SYNTHETASE BETA CHAIN AND LEUCINE-RICH REPEAT-CONTAINING PROTEIN 47"/>
    <property type="match status" value="1"/>
</dbReference>
<dbReference type="Pfam" id="PF03483">
    <property type="entry name" value="B3_4"/>
    <property type="match status" value="1"/>
</dbReference>
<dbReference type="Pfam" id="PF03484">
    <property type="entry name" value="B5"/>
    <property type="match status" value="1"/>
</dbReference>
<dbReference type="Pfam" id="PF03147">
    <property type="entry name" value="FDX-ACB"/>
    <property type="match status" value="1"/>
</dbReference>
<dbReference type="Pfam" id="PF01588">
    <property type="entry name" value="tRNA_bind"/>
    <property type="match status" value="1"/>
</dbReference>
<dbReference type="Pfam" id="PF17759">
    <property type="entry name" value="tRNA_synthFbeta"/>
    <property type="match status" value="1"/>
</dbReference>
<dbReference type="SMART" id="SM00873">
    <property type="entry name" value="B3_4"/>
    <property type="match status" value="1"/>
</dbReference>
<dbReference type="SMART" id="SM00874">
    <property type="entry name" value="B5"/>
    <property type="match status" value="1"/>
</dbReference>
<dbReference type="SMART" id="SM00896">
    <property type="entry name" value="FDX-ACB"/>
    <property type="match status" value="1"/>
</dbReference>
<dbReference type="SUPFAM" id="SSF54991">
    <property type="entry name" value="Anticodon-binding domain of PheRS"/>
    <property type="match status" value="1"/>
</dbReference>
<dbReference type="SUPFAM" id="SSF55681">
    <property type="entry name" value="Class II aaRS and biotin synthetases"/>
    <property type="match status" value="1"/>
</dbReference>
<dbReference type="SUPFAM" id="SSF50249">
    <property type="entry name" value="Nucleic acid-binding proteins"/>
    <property type="match status" value="1"/>
</dbReference>
<dbReference type="SUPFAM" id="SSF56037">
    <property type="entry name" value="PheT/TilS domain"/>
    <property type="match status" value="1"/>
</dbReference>
<dbReference type="SUPFAM" id="SSF46955">
    <property type="entry name" value="Putative DNA-binding domain"/>
    <property type="match status" value="1"/>
</dbReference>
<dbReference type="PROSITE" id="PS51483">
    <property type="entry name" value="B5"/>
    <property type="match status" value="1"/>
</dbReference>
<dbReference type="PROSITE" id="PS51447">
    <property type="entry name" value="FDX_ACB"/>
    <property type="match status" value="1"/>
</dbReference>
<dbReference type="PROSITE" id="PS50886">
    <property type="entry name" value="TRBD"/>
    <property type="match status" value="1"/>
</dbReference>
<sequence length="802" mass="87224">MLVSYKWLKELVDVDVTTAELAEKMSTTGIEVEGVKTPAEGLSKLVVGHVLSCEDVPETHLHLCQVDTGDAEGPRQIVCGAPNITAGIKVIVAIPGARIADNYKIKKGKIRGMESLGMICSLAELGLPDSIIPKEFADGIQILPEDAVPGDSIFPYLDLDDEIIELSITPNRADALSMRGVAHEVAAIYGKSVHFPEKTVTEDSKPASDKISVAIESDKVTTYASRVVENVTVQPSPQWLQNLLMNAGIRPINNVVDVTNYVLLYFGQPMHAFDLDKLEESHIVARDAREGEKLVTLDGEERELTAEDIVITVADKPVSLGGIMGGASTEIDNNSKNVVLEAAVFDGKSVRKTSSRLNLRSESSSRFEKGVNNDTVLEALDFAAAMLQELANGSVLAGRVQAGSVDTEPVQVSTSLDYVNVRLGTELTFADIEDVFAKLGFGLTGDADRFTVSVPRRRWDISIQADLVEEIARIYGYEKLPTTLPEAAGTSGELTKTQTLRRKVRTIAEGAGLTEIISYTLTTPEKAVEFAATPSNLTELMWPMTVDRSALRQNLVSGMLDTVAYNVNRKNSNVAIYEIGKVFEQNGNPKEELPNEINTFAFAISGLVAEKDFQTKATPVDFFYAKGIIEALFNKLEVSVDYVATKDLASMHPGRTAAIVLDGQTIGFLGQVHPQTAKNYGIPETYVAEINLSAVEDALKPAQPFVEITKFPAVSRDIALLLKADITHQEVLDAIYSAGVKRLIAVKLFDVYTGEKLGAGMKSMAYSLTFQNPNDNLTDEEVAKYMEKITKALTEKVEAEVR</sequence>
<comment type="catalytic activity">
    <reaction evidence="1">
        <text>tRNA(Phe) + L-phenylalanine + ATP = L-phenylalanyl-tRNA(Phe) + AMP + diphosphate + H(+)</text>
        <dbReference type="Rhea" id="RHEA:19413"/>
        <dbReference type="Rhea" id="RHEA-COMP:9668"/>
        <dbReference type="Rhea" id="RHEA-COMP:9699"/>
        <dbReference type="ChEBI" id="CHEBI:15378"/>
        <dbReference type="ChEBI" id="CHEBI:30616"/>
        <dbReference type="ChEBI" id="CHEBI:33019"/>
        <dbReference type="ChEBI" id="CHEBI:58095"/>
        <dbReference type="ChEBI" id="CHEBI:78442"/>
        <dbReference type="ChEBI" id="CHEBI:78531"/>
        <dbReference type="ChEBI" id="CHEBI:456215"/>
        <dbReference type="EC" id="6.1.1.20"/>
    </reaction>
</comment>
<comment type="cofactor">
    <cofactor evidence="1">
        <name>Mg(2+)</name>
        <dbReference type="ChEBI" id="CHEBI:18420"/>
    </cofactor>
    <text evidence="1">Binds 2 magnesium ions per tetramer.</text>
</comment>
<comment type="subunit">
    <text evidence="1">Tetramer of two alpha and two beta subunits.</text>
</comment>
<comment type="subcellular location">
    <subcellularLocation>
        <location>Cytoplasm</location>
    </subcellularLocation>
</comment>
<comment type="similarity">
    <text evidence="1">Belongs to the phenylalanyl-tRNA synthetase beta subunit family. Type 1 subfamily.</text>
</comment>
<comment type="sequence caution" evidence="2">
    <conflict type="erroneous initiation">
        <sequence resource="EMBL-CDS" id="AAV60923"/>
    </conflict>
</comment>
<proteinExistence type="inferred from homology"/>